<organism>
    <name type="scientific">Tetrahymena thermophila (strain SB210)</name>
    <dbReference type="NCBI Taxonomy" id="312017"/>
    <lineage>
        <taxon>Eukaryota</taxon>
        <taxon>Sar</taxon>
        <taxon>Alveolata</taxon>
        <taxon>Ciliophora</taxon>
        <taxon>Intramacronucleata</taxon>
        <taxon>Oligohymenophorea</taxon>
        <taxon>Hymenostomatida</taxon>
        <taxon>Tetrahymenina</taxon>
        <taxon>Tetrahymenidae</taxon>
        <taxon>Tetrahymena</taxon>
    </lineage>
</organism>
<keyword id="KW-0002">3D-structure</keyword>
<keyword id="KW-1185">Reference proteome</keyword>
<keyword id="KW-0687">Ribonucleoprotein</keyword>
<keyword id="KW-0689">Ribosomal protein</keyword>
<keyword id="KW-0694">RNA-binding</keyword>
<proteinExistence type="evidence at protein level"/>
<comment type="similarity">
    <text evidence="1">Belongs to the eukaryotic ribosomal protein eL22 family.</text>
</comment>
<accession>Q23BV5</accession>
<name>RL22_TETTS</name>
<gene>
    <name type="primary">RPL22</name>
    <name type="ORF">TTHERM_00227270</name>
</gene>
<sequence>MSFRKKTKQVKKVNLGFKIDCSQPVEDKVILIGEFAEFLKSKIKVGGKLGNLGENITISNDDKKINVQSTIPFSKRYLKYLTKKYLKKQDLRNYLYVTSSDKNSYQLRYFNIQQDQAE</sequence>
<reference key="1">
    <citation type="journal article" date="2006" name="PLoS Biol.">
        <title>Macronuclear genome sequence of the ciliate Tetrahymena thermophila, a model eukaryote.</title>
        <authorList>
            <person name="Eisen J.A."/>
            <person name="Coyne R.S."/>
            <person name="Wu M."/>
            <person name="Wu D."/>
            <person name="Thiagarajan M."/>
            <person name="Wortman J.R."/>
            <person name="Badger J.H."/>
            <person name="Ren Q."/>
            <person name="Amedeo P."/>
            <person name="Jones K.M."/>
            <person name="Tallon L.J."/>
            <person name="Delcher A.L."/>
            <person name="Salzberg S.L."/>
            <person name="Silva J.C."/>
            <person name="Haas B.J."/>
            <person name="Majoros W.H."/>
            <person name="Farzad M."/>
            <person name="Carlton J.M."/>
            <person name="Smith R.K. Jr."/>
            <person name="Garg J."/>
            <person name="Pearlman R.E."/>
            <person name="Karrer K.M."/>
            <person name="Sun L."/>
            <person name="Manning G."/>
            <person name="Elde N.C."/>
            <person name="Turkewitz A.P."/>
            <person name="Asai D.J."/>
            <person name="Wilkes D.E."/>
            <person name="Wang Y."/>
            <person name="Cai H."/>
            <person name="Collins K."/>
            <person name="Stewart B.A."/>
            <person name="Lee S.R."/>
            <person name="Wilamowska K."/>
            <person name="Weinberg Z."/>
            <person name="Ruzzo W.L."/>
            <person name="Wloga D."/>
            <person name="Gaertig J."/>
            <person name="Frankel J."/>
            <person name="Tsao C.-C."/>
            <person name="Gorovsky M.A."/>
            <person name="Keeling P.J."/>
            <person name="Waller R.F."/>
            <person name="Patron N.J."/>
            <person name="Cherry J.M."/>
            <person name="Stover N.A."/>
            <person name="Krieger C.J."/>
            <person name="del Toro C."/>
            <person name="Ryder H.F."/>
            <person name="Williamson S.C."/>
            <person name="Barbeau R.A."/>
            <person name="Hamilton E.P."/>
            <person name="Orias E."/>
        </authorList>
    </citation>
    <scope>NUCLEOTIDE SEQUENCE [LARGE SCALE GENOMIC DNA]</scope>
    <source>
        <strain>SB210</strain>
    </source>
</reference>
<feature type="chain" id="PRO_0000413506" description="Large ribosomal subunit protein eL22">
    <location>
        <begin position="1"/>
        <end position="118"/>
    </location>
</feature>
<protein>
    <recommendedName>
        <fullName evidence="1">Large ribosomal subunit protein eL22</fullName>
    </recommendedName>
    <alternativeName>
        <fullName>60S ribosomal protein L22</fullName>
    </alternativeName>
</protein>
<evidence type="ECO:0000305" key="1"/>
<dbReference type="EMBL" id="GG662718">
    <property type="protein sequence ID" value="EAR94013.3"/>
    <property type="molecule type" value="Genomic_DNA"/>
</dbReference>
<dbReference type="RefSeq" id="XP_001014258.3">
    <property type="nucleotide sequence ID" value="XM_001014258.3"/>
</dbReference>
<dbReference type="PDB" id="4V8P">
    <property type="method" value="X-ray"/>
    <property type="resolution" value="3.52 A"/>
    <property type="chains" value="AM/DM/FM/HM=1-118"/>
</dbReference>
<dbReference type="PDBsum" id="4V8P"/>
<dbReference type="SMR" id="Q23BV5"/>
<dbReference type="FunCoup" id="Q23BV5">
    <property type="interactions" value="351"/>
</dbReference>
<dbReference type="IntAct" id="Q23BV5">
    <property type="interactions" value="1"/>
</dbReference>
<dbReference type="STRING" id="312017.Q23BV5"/>
<dbReference type="EnsemblProtists" id="EAR94013">
    <property type="protein sequence ID" value="EAR94013"/>
    <property type="gene ID" value="TTHERM_00227270"/>
</dbReference>
<dbReference type="GeneID" id="7837789"/>
<dbReference type="KEGG" id="tet:TTHERM_00227270"/>
<dbReference type="eggNOG" id="KOG3434">
    <property type="taxonomic scope" value="Eukaryota"/>
</dbReference>
<dbReference type="HOGENOM" id="CLU_105624_0_1_1"/>
<dbReference type="InParanoid" id="Q23BV5"/>
<dbReference type="OMA" id="IMEIGSF"/>
<dbReference type="OrthoDB" id="10259820at2759"/>
<dbReference type="Proteomes" id="UP000009168">
    <property type="component" value="Unassembled WGS sequence"/>
</dbReference>
<dbReference type="GO" id="GO:1990904">
    <property type="term" value="C:ribonucleoprotein complex"/>
    <property type="evidence" value="ECO:0007669"/>
    <property type="project" value="UniProtKB-KW"/>
</dbReference>
<dbReference type="GO" id="GO:0005840">
    <property type="term" value="C:ribosome"/>
    <property type="evidence" value="ECO:0007669"/>
    <property type="project" value="UniProtKB-KW"/>
</dbReference>
<dbReference type="GO" id="GO:0003723">
    <property type="term" value="F:RNA binding"/>
    <property type="evidence" value="ECO:0007669"/>
    <property type="project" value="UniProtKB-KW"/>
</dbReference>
<dbReference type="GO" id="GO:0003735">
    <property type="term" value="F:structural constituent of ribosome"/>
    <property type="evidence" value="ECO:0007669"/>
    <property type="project" value="InterPro"/>
</dbReference>
<dbReference type="GO" id="GO:0002181">
    <property type="term" value="P:cytoplasmic translation"/>
    <property type="evidence" value="ECO:0007669"/>
    <property type="project" value="TreeGrafter"/>
</dbReference>
<dbReference type="FunFam" id="3.30.1360.210:FF:000002">
    <property type="entry name" value="60S ribosomal protein L22-2"/>
    <property type="match status" value="1"/>
</dbReference>
<dbReference type="Gene3D" id="3.30.1360.210">
    <property type="match status" value="1"/>
</dbReference>
<dbReference type="InterPro" id="IPR002671">
    <property type="entry name" value="Ribosomal_eL22"/>
</dbReference>
<dbReference type="InterPro" id="IPR038526">
    <property type="entry name" value="Ribosomal_eL22_sf"/>
</dbReference>
<dbReference type="PANTHER" id="PTHR10064">
    <property type="entry name" value="60S RIBOSOMAL PROTEIN L22"/>
    <property type="match status" value="1"/>
</dbReference>
<dbReference type="PANTHER" id="PTHR10064:SF0">
    <property type="entry name" value="FI24544P1-RELATED"/>
    <property type="match status" value="1"/>
</dbReference>
<dbReference type="Pfam" id="PF01776">
    <property type="entry name" value="Ribosomal_L22e"/>
    <property type="match status" value="1"/>
</dbReference>